<sequence>MDKLLERFLNYVSLDTQSKAGVRQVPSTEGQWKLLHLLKEQLEEMGLINVTLSEKGTLMATLPANVPGDIPAIGFISHVDTSPDCSGKNVNPQIVENYRGGDIALGIGDEVLSPVMFPVLHQLLGQTLITTDGKTLLGADDKAGIAEIMTALAVLQQKNIPHGDIRVAFTPDEEVGKGAKHFDVDAFDARWAYTVDGGGVGELEFENFNAASVNIKIVGNNVHPGTAKGVMVNALSLAARIHAEVPADESPEMTEGYEGFYHLASMKGTVERADMHYIIRDFDRKQFEARKRKMMEIAKKVGKGLHPDCYIELVIEDSYYNMREKVVEHPHILDIAQQAMRDCDIEPELKPIRGGTDGAQLSFMGLPCPNLFTGGYNYHGKHEFVTLEGMEKAVQVIVRIAELTAQRK</sequence>
<reference key="1">
    <citation type="journal article" date="2006" name="Proc. Natl. Acad. Sci. U.S.A.">
        <title>Identification of genes subject to positive selection in uropathogenic strains of Escherichia coli: a comparative genomics approach.</title>
        <authorList>
            <person name="Chen S.L."/>
            <person name="Hung C.-S."/>
            <person name="Xu J."/>
            <person name="Reigstad C.S."/>
            <person name="Magrini V."/>
            <person name="Sabo A."/>
            <person name="Blasiar D."/>
            <person name="Bieri T."/>
            <person name="Meyer R.R."/>
            <person name="Ozersky P."/>
            <person name="Armstrong J.R."/>
            <person name="Fulton R.S."/>
            <person name="Latreille J.P."/>
            <person name="Spieth J."/>
            <person name="Hooton T.M."/>
            <person name="Mardis E.R."/>
            <person name="Hultgren S.J."/>
            <person name="Gordon J.I."/>
        </authorList>
    </citation>
    <scope>NUCLEOTIDE SEQUENCE [LARGE SCALE GENOMIC DNA]</scope>
    <source>
        <strain>UTI89 / UPEC</strain>
    </source>
</reference>
<evidence type="ECO:0000255" key="1">
    <source>
        <dbReference type="HAMAP-Rule" id="MF_00550"/>
    </source>
</evidence>
<keyword id="KW-0031">Aminopeptidase</keyword>
<keyword id="KW-0963">Cytoplasm</keyword>
<keyword id="KW-0378">Hydrolase</keyword>
<keyword id="KW-0479">Metal-binding</keyword>
<keyword id="KW-0482">Metalloprotease</keyword>
<keyword id="KW-0645">Protease</keyword>
<keyword id="KW-0862">Zinc</keyword>
<organism>
    <name type="scientific">Escherichia coli (strain UTI89 / UPEC)</name>
    <dbReference type="NCBI Taxonomy" id="364106"/>
    <lineage>
        <taxon>Bacteria</taxon>
        <taxon>Pseudomonadati</taxon>
        <taxon>Pseudomonadota</taxon>
        <taxon>Gammaproteobacteria</taxon>
        <taxon>Enterobacterales</taxon>
        <taxon>Enterobacteriaceae</taxon>
        <taxon>Escherichia</taxon>
    </lineage>
</organism>
<feature type="chain" id="PRO_0000274014" description="Peptidase T">
    <location>
        <begin position="1"/>
        <end position="408"/>
    </location>
</feature>
<feature type="active site" evidence="1">
    <location>
        <position position="80"/>
    </location>
</feature>
<feature type="active site" description="Proton acceptor" evidence="1">
    <location>
        <position position="173"/>
    </location>
</feature>
<feature type="binding site" evidence="1">
    <location>
        <position position="78"/>
    </location>
    <ligand>
        <name>Zn(2+)</name>
        <dbReference type="ChEBI" id="CHEBI:29105"/>
        <label>1</label>
    </ligand>
</feature>
<feature type="binding site" evidence="1">
    <location>
        <position position="140"/>
    </location>
    <ligand>
        <name>Zn(2+)</name>
        <dbReference type="ChEBI" id="CHEBI:29105"/>
        <label>1</label>
    </ligand>
</feature>
<feature type="binding site" evidence="1">
    <location>
        <position position="140"/>
    </location>
    <ligand>
        <name>Zn(2+)</name>
        <dbReference type="ChEBI" id="CHEBI:29105"/>
        <label>2</label>
    </ligand>
</feature>
<feature type="binding site" evidence="1">
    <location>
        <position position="174"/>
    </location>
    <ligand>
        <name>Zn(2+)</name>
        <dbReference type="ChEBI" id="CHEBI:29105"/>
        <label>2</label>
    </ligand>
</feature>
<feature type="binding site" evidence="1">
    <location>
        <position position="196"/>
    </location>
    <ligand>
        <name>Zn(2+)</name>
        <dbReference type="ChEBI" id="CHEBI:29105"/>
        <label>1</label>
    </ligand>
</feature>
<feature type="binding site" evidence="1">
    <location>
        <position position="379"/>
    </location>
    <ligand>
        <name>Zn(2+)</name>
        <dbReference type="ChEBI" id="CHEBI:29105"/>
        <label>2</label>
    </ligand>
</feature>
<proteinExistence type="inferred from homology"/>
<dbReference type="EC" id="3.4.11.4" evidence="1"/>
<dbReference type="EMBL" id="CP000243">
    <property type="protein sequence ID" value="ABE06738.1"/>
    <property type="molecule type" value="Genomic_DNA"/>
</dbReference>
<dbReference type="RefSeq" id="WP_000359446.1">
    <property type="nucleotide sequence ID" value="NZ_CP064825.1"/>
</dbReference>
<dbReference type="SMR" id="Q1RD26"/>
<dbReference type="MEROPS" id="M20.003"/>
<dbReference type="GeneID" id="93776283"/>
<dbReference type="KEGG" id="eci:UTI89_C1256"/>
<dbReference type="HOGENOM" id="CLU_053676_0_0_6"/>
<dbReference type="Proteomes" id="UP000001952">
    <property type="component" value="Chromosome"/>
</dbReference>
<dbReference type="GO" id="GO:0005829">
    <property type="term" value="C:cytosol"/>
    <property type="evidence" value="ECO:0007669"/>
    <property type="project" value="TreeGrafter"/>
</dbReference>
<dbReference type="GO" id="GO:0008237">
    <property type="term" value="F:metallopeptidase activity"/>
    <property type="evidence" value="ECO:0007669"/>
    <property type="project" value="UniProtKB-KW"/>
</dbReference>
<dbReference type="GO" id="GO:0045148">
    <property type="term" value="F:tripeptide aminopeptidase activity"/>
    <property type="evidence" value="ECO:0007669"/>
    <property type="project" value="UniProtKB-UniRule"/>
</dbReference>
<dbReference type="GO" id="GO:0008270">
    <property type="term" value="F:zinc ion binding"/>
    <property type="evidence" value="ECO:0007669"/>
    <property type="project" value="UniProtKB-UniRule"/>
</dbReference>
<dbReference type="GO" id="GO:0043171">
    <property type="term" value="P:peptide catabolic process"/>
    <property type="evidence" value="ECO:0007669"/>
    <property type="project" value="UniProtKB-UniRule"/>
</dbReference>
<dbReference type="GO" id="GO:0006508">
    <property type="term" value="P:proteolysis"/>
    <property type="evidence" value="ECO:0007669"/>
    <property type="project" value="UniProtKB-UniRule"/>
</dbReference>
<dbReference type="CDD" id="cd03892">
    <property type="entry name" value="M20_peptT"/>
    <property type="match status" value="1"/>
</dbReference>
<dbReference type="FunFam" id="3.30.70.360:FF:000002">
    <property type="entry name" value="Peptidase T"/>
    <property type="match status" value="1"/>
</dbReference>
<dbReference type="Gene3D" id="3.30.70.360">
    <property type="match status" value="1"/>
</dbReference>
<dbReference type="Gene3D" id="3.40.630.10">
    <property type="entry name" value="Zn peptidases"/>
    <property type="match status" value="1"/>
</dbReference>
<dbReference type="HAMAP" id="MF_00550">
    <property type="entry name" value="Aminopeptidase_M20"/>
    <property type="match status" value="1"/>
</dbReference>
<dbReference type="InterPro" id="IPR001261">
    <property type="entry name" value="ArgE/DapE_CS"/>
</dbReference>
<dbReference type="InterPro" id="IPR036264">
    <property type="entry name" value="Bact_exopeptidase_dim_dom"/>
</dbReference>
<dbReference type="InterPro" id="IPR002933">
    <property type="entry name" value="Peptidase_M20"/>
</dbReference>
<dbReference type="InterPro" id="IPR011650">
    <property type="entry name" value="Peptidase_M20_dimer"/>
</dbReference>
<dbReference type="InterPro" id="IPR010161">
    <property type="entry name" value="Peptidase_M20B"/>
</dbReference>
<dbReference type="NCBIfam" id="TIGR01882">
    <property type="entry name" value="peptidase-T"/>
    <property type="match status" value="1"/>
</dbReference>
<dbReference type="NCBIfam" id="NF003976">
    <property type="entry name" value="PRK05469.1"/>
    <property type="match status" value="1"/>
</dbReference>
<dbReference type="NCBIfam" id="NF009920">
    <property type="entry name" value="PRK13381.1"/>
    <property type="match status" value="1"/>
</dbReference>
<dbReference type="PANTHER" id="PTHR42994">
    <property type="entry name" value="PEPTIDASE T"/>
    <property type="match status" value="1"/>
</dbReference>
<dbReference type="PANTHER" id="PTHR42994:SF1">
    <property type="entry name" value="PEPTIDASE T"/>
    <property type="match status" value="1"/>
</dbReference>
<dbReference type="Pfam" id="PF07687">
    <property type="entry name" value="M20_dimer"/>
    <property type="match status" value="1"/>
</dbReference>
<dbReference type="Pfam" id="PF01546">
    <property type="entry name" value="Peptidase_M20"/>
    <property type="match status" value="1"/>
</dbReference>
<dbReference type="PIRSF" id="PIRSF037215">
    <property type="entry name" value="Peptidase_M20B"/>
    <property type="match status" value="1"/>
</dbReference>
<dbReference type="SUPFAM" id="SSF55031">
    <property type="entry name" value="Bacterial exopeptidase dimerisation domain"/>
    <property type="match status" value="1"/>
</dbReference>
<dbReference type="SUPFAM" id="SSF53187">
    <property type="entry name" value="Zn-dependent exopeptidases"/>
    <property type="match status" value="1"/>
</dbReference>
<dbReference type="PROSITE" id="PS00758">
    <property type="entry name" value="ARGE_DAPE_CPG2_1"/>
    <property type="match status" value="1"/>
</dbReference>
<dbReference type="PROSITE" id="PS00759">
    <property type="entry name" value="ARGE_DAPE_CPG2_2"/>
    <property type="match status" value="1"/>
</dbReference>
<name>PEPT_ECOUT</name>
<comment type="function">
    <text evidence="1">Cleaves the N-terminal amino acid of tripeptides.</text>
</comment>
<comment type="catalytic activity">
    <reaction evidence="1">
        <text>Release of the N-terminal residue from a tripeptide.</text>
        <dbReference type="EC" id="3.4.11.4"/>
    </reaction>
</comment>
<comment type="cofactor">
    <cofactor evidence="1">
        <name>Zn(2+)</name>
        <dbReference type="ChEBI" id="CHEBI:29105"/>
    </cofactor>
    <text evidence="1">Binds 2 Zn(2+) ions per subunit.</text>
</comment>
<comment type="subcellular location">
    <subcellularLocation>
        <location evidence="1">Cytoplasm</location>
    </subcellularLocation>
</comment>
<comment type="similarity">
    <text evidence="1">Belongs to the peptidase M20B family.</text>
</comment>
<protein>
    <recommendedName>
        <fullName evidence="1">Peptidase T</fullName>
        <ecNumber evidence="1">3.4.11.4</ecNumber>
    </recommendedName>
    <alternativeName>
        <fullName evidence="1">Aminotripeptidase</fullName>
        <shortName evidence="1">Tripeptidase</shortName>
    </alternativeName>
    <alternativeName>
        <fullName evidence="1">Tripeptide aminopeptidase</fullName>
    </alternativeName>
</protein>
<gene>
    <name evidence="1" type="primary">pepT</name>
    <name type="ordered locus">UTI89_C1256</name>
</gene>
<accession>Q1RD26</accession>